<organism>
    <name type="scientific">Acidithiobacillus ferrooxidans (strain ATCC 23270 / DSM 14882 / CIP 104768 / NCIMB 8455)</name>
    <name type="common">Ferrobacillus ferrooxidans (strain ATCC 23270)</name>
    <dbReference type="NCBI Taxonomy" id="243159"/>
    <lineage>
        <taxon>Bacteria</taxon>
        <taxon>Pseudomonadati</taxon>
        <taxon>Pseudomonadota</taxon>
        <taxon>Acidithiobacillia</taxon>
        <taxon>Acidithiobacillales</taxon>
        <taxon>Acidithiobacillaceae</taxon>
        <taxon>Acidithiobacillus</taxon>
    </lineage>
</organism>
<comment type="function">
    <text evidence="1">Carrier of the growing fatty acid chain in fatty acid biosynthesis.</text>
</comment>
<comment type="pathway">
    <text evidence="1">Lipid metabolism; fatty acid biosynthesis.</text>
</comment>
<comment type="subcellular location">
    <subcellularLocation>
        <location evidence="1">Cytoplasm</location>
    </subcellularLocation>
</comment>
<comment type="PTM">
    <text evidence="1">4'-phosphopantetheine is transferred from CoA to a specific serine of apo-ACP by AcpS. This modification is essential for activity because fatty acids are bound in thioester linkage to the sulfhydryl of the prosthetic group.</text>
</comment>
<comment type="similarity">
    <text evidence="1">Belongs to the acyl carrier protein (ACP) family.</text>
</comment>
<gene>
    <name evidence="1" type="primary">acpP</name>
    <name type="ordered locus">AFE_1909</name>
</gene>
<reference key="1">
    <citation type="journal article" date="2008" name="BMC Genomics">
        <title>Acidithiobacillus ferrooxidans metabolism: from genome sequence to industrial applications.</title>
        <authorList>
            <person name="Valdes J."/>
            <person name="Pedroso I."/>
            <person name="Quatrini R."/>
            <person name="Dodson R.J."/>
            <person name="Tettelin H."/>
            <person name="Blake R. II"/>
            <person name="Eisen J.A."/>
            <person name="Holmes D.S."/>
        </authorList>
    </citation>
    <scope>NUCLEOTIDE SEQUENCE [LARGE SCALE GENOMIC DNA]</scope>
    <source>
        <strain>ATCC 23270 / DSM 14882 / CIP 104768 / NCIMB 8455</strain>
    </source>
</reference>
<keyword id="KW-0963">Cytoplasm</keyword>
<keyword id="KW-0275">Fatty acid biosynthesis</keyword>
<keyword id="KW-0276">Fatty acid metabolism</keyword>
<keyword id="KW-0444">Lipid biosynthesis</keyword>
<keyword id="KW-0443">Lipid metabolism</keyword>
<keyword id="KW-0596">Phosphopantetheine</keyword>
<keyword id="KW-0597">Phosphoprotein</keyword>
<keyword id="KW-1185">Reference proteome</keyword>
<accession>B7JC10</accession>
<sequence>MDNVADRVKKVVVEQLGVNEDEVTNEASFVDDLGADSLDTVELVMALEEEFDCEIPDEEAEKIATVQQAIDYVSAHIPAKDA</sequence>
<dbReference type="EMBL" id="CP001219">
    <property type="protein sequence ID" value="ACK79577.1"/>
    <property type="molecule type" value="Genomic_DNA"/>
</dbReference>
<dbReference type="RefSeq" id="WP_009561355.1">
    <property type="nucleotide sequence ID" value="NC_011761.1"/>
</dbReference>
<dbReference type="SMR" id="B7JC10"/>
<dbReference type="STRING" id="243159.AFE_1909"/>
<dbReference type="PaxDb" id="243159-AFE_1909"/>
<dbReference type="GeneID" id="65281064"/>
<dbReference type="KEGG" id="afr:AFE_1909"/>
<dbReference type="eggNOG" id="COG0236">
    <property type="taxonomic scope" value="Bacteria"/>
</dbReference>
<dbReference type="HOGENOM" id="CLU_108696_5_1_6"/>
<dbReference type="UniPathway" id="UPA00094"/>
<dbReference type="Proteomes" id="UP000001362">
    <property type="component" value="Chromosome"/>
</dbReference>
<dbReference type="GO" id="GO:0005829">
    <property type="term" value="C:cytosol"/>
    <property type="evidence" value="ECO:0007669"/>
    <property type="project" value="TreeGrafter"/>
</dbReference>
<dbReference type="GO" id="GO:0016020">
    <property type="term" value="C:membrane"/>
    <property type="evidence" value="ECO:0007669"/>
    <property type="project" value="GOC"/>
</dbReference>
<dbReference type="GO" id="GO:0000035">
    <property type="term" value="F:acyl binding"/>
    <property type="evidence" value="ECO:0007669"/>
    <property type="project" value="TreeGrafter"/>
</dbReference>
<dbReference type="GO" id="GO:0000036">
    <property type="term" value="F:acyl carrier activity"/>
    <property type="evidence" value="ECO:0007669"/>
    <property type="project" value="UniProtKB-UniRule"/>
</dbReference>
<dbReference type="GO" id="GO:0031177">
    <property type="term" value="F:phosphopantetheine binding"/>
    <property type="evidence" value="ECO:0007669"/>
    <property type="project" value="InterPro"/>
</dbReference>
<dbReference type="GO" id="GO:0009245">
    <property type="term" value="P:lipid A biosynthetic process"/>
    <property type="evidence" value="ECO:0007669"/>
    <property type="project" value="TreeGrafter"/>
</dbReference>
<dbReference type="FunFam" id="1.10.1200.10:FF:000001">
    <property type="entry name" value="Acyl carrier protein"/>
    <property type="match status" value="1"/>
</dbReference>
<dbReference type="Gene3D" id="1.10.1200.10">
    <property type="entry name" value="ACP-like"/>
    <property type="match status" value="1"/>
</dbReference>
<dbReference type="HAMAP" id="MF_01217">
    <property type="entry name" value="Acyl_carrier"/>
    <property type="match status" value="1"/>
</dbReference>
<dbReference type="InterPro" id="IPR003231">
    <property type="entry name" value="ACP"/>
</dbReference>
<dbReference type="InterPro" id="IPR036736">
    <property type="entry name" value="ACP-like_sf"/>
</dbReference>
<dbReference type="InterPro" id="IPR020806">
    <property type="entry name" value="PKS_PP-bd"/>
</dbReference>
<dbReference type="InterPro" id="IPR009081">
    <property type="entry name" value="PP-bd_ACP"/>
</dbReference>
<dbReference type="InterPro" id="IPR006162">
    <property type="entry name" value="Ppantetheine_attach_site"/>
</dbReference>
<dbReference type="NCBIfam" id="TIGR00517">
    <property type="entry name" value="acyl_carrier"/>
    <property type="match status" value="1"/>
</dbReference>
<dbReference type="NCBIfam" id="NF002148">
    <property type="entry name" value="PRK00982.1-2"/>
    <property type="match status" value="1"/>
</dbReference>
<dbReference type="NCBIfam" id="NF002149">
    <property type="entry name" value="PRK00982.1-3"/>
    <property type="match status" value="1"/>
</dbReference>
<dbReference type="NCBIfam" id="NF002150">
    <property type="entry name" value="PRK00982.1-4"/>
    <property type="match status" value="1"/>
</dbReference>
<dbReference type="NCBIfam" id="NF002151">
    <property type="entry name" value="PRK00982.1-5"/>
    <property type="match status" value="1"/>
</dbReference>
<dbReference type="PANTHER" id="PTHR20863">
    <property type="entry name" value="ACYL CARRIER PROTEIN"/>
    <property type="match status" value="1"/>
</dbReference>
<dbReference type="PANTHER" id="PTHR20863:SF76">
    <property type="entry name" value="CARRIER DOMAIN-CONTAINING PROTEIN"/>
    <property type="match status" value="1"/>
</dbReference>
<dbReference type="Pfam" id="PF00550">
    <property type="entry name" value="PP-binding"/>
    <property type="match status" value="1"/>
</dbReference>
<dbReference type="SMART" id="SM00823">
    <property type="entry name" value="PKS_PP"/>
    <property type="match status" value="1"/>
</dbReference>
<dbReference type="SUPFAM" id="SSF47336">
    <property type="entry name" value="ACP-like"/>
    <property type="match status" value="1"/>
</dbReference>
<dbReference type="PROSITE" id="PS50075">
    <property type="entry name" value="CARRIER"/>
    <property type="match status" value="1"/>
</dbReference>
<dbReference type="PROSITE" id="PS00012">
    <property type="entry name" value="PHOSPHOPANTETHEINE"/>
    <property type="match status" value="1"/>
</dbReference>
<name>ACP_ACIF2</name>
<protein>
    <recommendedName>
        <fullName evidence="1">Acyl carrier protein</fullName>
        <shortName evidence="1">ACP</shortName>
    </recommendedName>
</protein>
<feature type="chain" id="PRO_1000138992" description="Acyl carrier protein">
    <location>
        <begin position="1"/>
        <end position="82"/>
    </location>
</feature>
<feature type="domain" description="Carrier" evidence="2">
    <location>
        <begin position="2"/>
        <end position="77"/>
    </location>
</feature>
<feature type="modified residue" description="O-(pantetheine 4'-phosphoryl)serine" evidence="2">
    <location>
        <position position="37"/>
    </location>
</feature>
<evidence type="ECO:0000255" key="1">
    <source>
        <dbReference type="HAMAP-Rule" id="MF_01217"/>
    </source>
</evidence>
<evidence type="ECO:0000255" key="2">
    <source>
        <dbReference type="PROSITE-ProRule" id="PRU00258"/>
    </source>
</evidence>
<proteinExistence type="inferred from homology"/>